<organism>
    <name type="scientific">Methanothrix thermoacetophila (strain DSM 6194 / JCM 14653 / NBRC 101360 / PT)</name>
    <name type="common">Methanosaeta thermophila</name>
    <dbReference type="NCBI Taxonomy" id="349307"/>
    <lineage>
        <taxon>Archaea</taxon>
        <taxon>Methanobacteriati</taxon>
        <taxon>Methanobacteriota</taxon>
        <taxon>Stenosarchaea group</taxon>
        <taxon>Methanomicrobia</taxon>
        <taxon>Methanotrichales</taxon>
        <taxon>Methanotrichaceae</taxon>
        <taxon>Methanothrix</taxon>
    </lineage>
</organism>
<name>SYR_METTP</name>
<accession>A0B5P0</accession>
<reference key="1">
    <citation type="submission" date="2006-10" db="EMBL/GenBank/DDBJ databases">
        <title>Complete sequence of Methanosaeta thermophila PT.</title>
        <authorList>
            <consortium name="US DOE Joint Genome Institute"/>
            <person name="Copeland A."/>
            <person name="Lucas S."/>
            <person name="Lapidus A."/>
            <person name="Barry K."/>
            <person name="Detter J.C."/>
            <person name="Glavina del Rio T."/>
            <person name="Hammon N."/>
            <person name="Israni S."/>
            <person name="Pitluck S."/>
            <person name="Chain P."/>
            <person name="Malfatti S."/>
            <person name="Shin M."/>
            <person name="Vergez L."/>
            <person name="Schmutz J."/>
            <person name="Larimer F."/>
            <person name="Land M."/>
            <person name="Hauser L."/>
            <person name="Kyrpides N."/>
            <person name="Kim E."/>
            <person name="Smith K.S."/>
            <person name="Ingram-Smith C."/>
            <person name="Richardson P."/>
        </authorList>
    </citation>
    <scope>NUCLEOTIDE SEQUENCE [LARGE SCALE GENOMIC DNA]</scope>
    <source>
        <strain>DSM 6194 / JCM 14653 / NBRC 101360 / PT</strain>
    </source>
</reference>
<keyword id="KW-0030">Aminoacyl-tRNA synthetase</keyword>
<keyword id="KW-0067">ATP-binding</keyword>
<keyword id="KW-0963">Cytoplasm</keyword>
<keyword id="KW-0436">Ligase</keyword>
<keyword id="KW-0547">Nucleotide-binding</keyword>
<keyword id="KW-0648">Protein biosynthesis</keyword>
<keyword id="KW-1185">Reference proteome</keyword>
<comment type="catalytic activity">
    <reaction evidence="1">
        <text>tRNA(Arg) + L-arginine + ATP = L-arginyl-tRNA(Arg) + AMP + diphosphate</text>
        <dbReference type="Rhea" id="RHEA:20301"/>
        <dbReference type="Rhea" id="RHEA-COMP:9658"/>
        <dbReference type="Rhea" id="RHEA-COMP:9673"/>
        <dbReference type="ChEBI" id="CHEBI:30616"/>
        <dbReference type="ChEBI" id="CHEBI:32682"/>
        <dbReference type="ChEBI" id="CHEBI:33019"/>
        <dbReference type="ChEBI" id="CHEBI:78442"/>
        <dbReference type="ChEBI" id="CHEBI:78513"/>
        <dbReference type="ChEBI" id="CHEBI:456215"/>
        <dbReference type="EC" id="6.1.1.19"/>
    </reaction>
</comment>
<comment type="subcellular location">
    <subcellularLocation>
        <location evidence="1">Cytoplasm</location>
    </subcellularLocation>
</comment>
<comment type="similarity">
    <text evidence="1">Belongs to the class-I aminoacyl-tRNA synthetase family.</text>
</comment>
<sequence>MFLDFMSEVEGILKEGLDRCGLSVPLENSLDLSPHADLSTTIAFRLSPVLRKDPKDVAAEIYNSMGSPSRWVDRAELVGPYINFYMSRNFLDNVVTKAQGEDAWWGRRSGSVVVEHTSANPDGPLHVGHIRNSVIGDTIVRILRRAGYNVEAQYYVNDMGRQTAMVVWGCDHLDLDDSKPDHAIARVYIAAHKIMNEKPELSAEVDELMRRYESRDPEIVKKFQRAARYAISGIERTLHRMNIHHDSYKWESEFVWDGSVDEILEMLERTGRTVLKDGALQLDLSEEGFEKSLVLRRADGTTLYTTRDLAYHKWKAENYERVVEVLGADHKLISAQLRTALRMLGIGEPEVVIFEFVSLPDGSMSTRRGKFISADELLDEVEKQAYLEVTKRRPEMDEEFRRDVAGKVAVGAVRYDIVRVSADKATTFDWKTALDFEKLSAPFIQYSHARACSIINKAGELDEFDPGLLRDDYEIALIKKIAEFDLVIERAARELKPHQLATYARELAERFNLFYRYDPVLDAKPVELRNARLGLVRASRNALSATLDTLGIDAPESM</sequence>
<feature type="chain" id="PRO_1000018066" description="Arginine--tRNA ligase">
    <location>
        <begin position="1"/>
        <end position="558"/>
    </location>
</feature>
<feature type="short sequence motif" description="'HIGH' region">
    <location>
        <begin position="119"/>
        <end position="129"/>
    </location>
</feature>
<protein>
    <recommendedName>
        <fullName evidence="1">Arginine--tRNA ligase</fullName>
        <ecNumber evidence="1">6.1.1.19</ecNumber>
    </recommendedName>
    <alternativeName>
        <fullName evidence="1">Arginyl-tRNA synthetase</fullName>
        <shortName evidence="1">ArgRS</shortName>
    </alternativeName>
</protein>
<evidence type="ECO:0000255" key="1">
    <source>
        <dbReference type="HAMAP-Rule" id="MF_00123"/>
    </source>
</evidence>
<gene>
    <name evidence="1" type="primary">argS</name>
    <name type="ordered locus">Mthe_0216</name>
</gene>
<dbReference type="EC" id="6.1.1.19" evidence="1"/>
<dbReference type="EMBL" id="CP000477">
    <property type="protein sequence ID" value="ABK14014.1"/>
    <property type="molecule type" value="Genomic_DNA"/>
</dbReference>
<dbReference type="RefSeq" id="WP_011695413.1">
    <property type="nucleotide sequence ID" value="NC_008553.1"/>
</dbReference>
<dbReference type="SMR" id="A0B5P0"/>
<dbReference type="STRING" id="349307.Mthe_0216"/>
<dbReference type="GeneID" id="4462997"/>
<dbReference type="KEGG" id="mtp:Mthe_0216"/>
<dbReference type="HOGENOM" id="CLU_006406_6_1_2"/>
<dbReference type="OrthoDB" id="372102at2157"/>
<dbReference type="Proteomes" id="UP000000674">
    <property type="component" value="Chromosome"/>
</dbReference>
<dbReference type="GO" id="GO:0005737">
    <property type="term" value="C:cytoplasm"/>
    <property type="evidence" value="ECO:0007669"/>
    <property type="project" value="UniProtKB-SubCell"/>
</dbReference>
<dbReference type="GO" id="GO:0004814">
    <property type="term" value="F:arginine-tRNA ligase activity"/>
    <property type="evidence" value="ECO:0007669"/>
    <property type="project" value="UniProtKB-UniRule"/>
</dbReference>
<dbReference type="GO" id="GO:0005524">
    <property type="term" value="F:ATP binding"/>
    <property type="evidence" value="ECO:0007669"/>
    <property type="project" value="UniProtKB-UniRule"/>
</dbReference>
<dbReference type="GO" id="GO:0006420">
    <property type="term" value="P:arginyl-tRNA aminoacylation"/>
    <property type="evidence" value="ECO:0007669"/>
    <property type="project" value="UniProtKB-UniRule"/>
</dbReference>
<dbReference type="CDD" id="cd00671">
    <property type="entry name" value="ArgRS_core"/>
    <property type="match status" value="1"/>
</dbReference>
<dbReference type="Gene3D" id="3.30.1360.70">
    <property type="entry name" value="Arginyl tRNA synthetase N-terminal domain"/>
    <property type="match status" value="1"/>
</dbReference>
<dbReference type="Gene3D" id="3.40.50.620">
    <property type="entry name" value="HUPs"/>
    <property type="match status" value="1"/>
</dbReference>
<dbReference type="Gene3D" id="1.10.730.10">
    <property type="entry name" value="Isoleucyl-tRNA Synthetase, Domain 1"/>
    <property type="match status" value="1"/>
</dbReference>
<dbReference type="HAMAP" id="MF_00123">
    <property type="entry name" value="Arg_tRNA_synth"/>
    <property type="match status" value="1"/>
</dbReference>
<dbReference type="InterPro" id="IPR001278">
    <property type="entry name" value="Arg-tRNA-ligase"/>
</dbReference>
<dbReference type="InterPro" id="IPR005148">
    <property type="entry name" value="Arg-tRNA-synth_N"/>
</dbReference>
<dbReference type="InterPro" id="IPR036695">
    <property type="entry name" value="Arg-tRNA-synth_N_sf"/>
</dbReference>
<dbReference type="InterPro" id="IPR035684">
    <property type="entry name" value="ArgRS_core"/>
</dbReference>
<dbReference type="InterPro" id="IPR008909">
    <property type="entry name" value="DALR_anticod-bd"/>
</dbReference>
<dbReference type="InterPro" id="IPR014729">
    <property type="entry name" value="Rossmann-like_a/b/a_fold"/>
</dbReference>
<dbReference type="InterPro" id="IPR009080">
    <property type="entry name" value="tRNAsynth_Ia_anticodon-bd"/>
</dbReference>
<dbReference type="NCBIfam" id="TIGR00456">
    <property type="entry name" value="argS"/>
    <property type="match status" value="1"/>
</dbReference>
<dbReference type="PANTHER" id="PTHR11956:SF5">
    <property type="entry name" value="ARGININE--TRNA LIGASE, CYTOPLASMIC"/>
    <property type="match status" value="1"/>
</dbReference>
<dbReference type="PANTHER" id="PTHR11956">
    <property type="entry name" value="ARGINYL-TRNA SYNTHETASE"/>
    <property type="match status" value="1"/>
</dbReference>
<dbReference type="Pfam" id="PF03485">
    <property type="entry name" value="Arg_tRNA_synt_N"/>
    <property type="match status" value="1"/>
</dbReference>
<dbReference type="Pfam" id="PF05746">
    <property type="entry name" value="DALR_1"/>
    <property type="match status" value="1"/>
</dbReference>
<dbReference type="Pfam" id="PF00750">
    <property type="entry name" value="tRNA-synt_1d"/>
    <property type="match status" value="1"/>
</dbReference>
<dbReference type="PRINTS" id="PR01038">
    <property type="entry name" value="TRNASYNTHARG"/>
</dbReference>
<dbReference type="SMART" id="SM01016">
    <property type="entry name" value="Arg_tRNA_synt_N"/>
    <property type="match status" value="1"/>
</dbReference>
<dbReference type="SMART" id="SM00836">
    <property type="entry name" value="DALR_1"/>
    <property type="match status" value="1"/>
</dbReference>
<dbReference type="SUPFAM" id="SSF47323">
    <property type="entry name" value="Anticodon-binding domain of a subclass of class I aminoacyl-tRNA synthetases"/>
    <property type="match status" value="1"/>
</dbReference>
<dbReference type="SUPFAM" id="SSF55190">
    <property type="entry name" value="Arginyl-tRNA synthetase (ArgRS), N-terminal 'additional' domain"/>
    <property type="match status" value="1"/>
</dbReference>
<dbReference type="SUPFAM" id="SSF52374">
    <property type="entry name" value="Nucleotidylyl transferase"/>
    <property type="match status" value="1"/>
</dbReference>
<proteinExistence type="inferred from homology"/>